<dbReference type="EMBL" id="AJ272229">
    <property type="protein sequence ID" value="CAB75587.1"/>
    <property type="molecule type" value="mRNA"/>
</dbReference>
<dbReference type="EMBL" id="BC031442">
    <property type="protein sequence ID" value="AAH31442.1"/>
    <property type="molecule type" value="mRNA"/>
</dbReference>
<dbReference type="EMBL" id="BC058522">
    <property type="protein sequence ID" value="AAH58522.1"/>
    <property type="molecule type" value="mRNA"/>
</dbReference>
<dbReference type="CCDS" id="CCDS19547.1"/>
<dbReference type="RefSeq" id="NP_001153122.1">
    <property type="nucleotide sequence ID" value="NM_001159650.1"/>
</dbReference>
<dbReference type="RefSeq" id="NP_001345933.1">
    <property type="nucleotide sequence ID" value="NM_001359004.1"/>
</dbReference>
<dbReference type="RefSeq" id="NP_001345934.1">
    <property type="nucleotide sequence ID" value="NM_001359005.1"/>
</dbReference>
<dbReference type="RefSeq" id="NP_001345935.1">
    <property type="nucleotide sequence ID" value="NM_001359006.1"/>
</dbReference>
<dbReference type="RefSeq" id="NP_001345936.1">
    <property type="nucleotide sequence ID" value="NM_001359007.1"/>
</dbReference>
<dbReference type="RefSeq" id="NP_001345937.1">
    <property type="nucleotide sequence ID" value="NM_001359008.1"/>
</dbReference>
<dbReference type="RefSeq" id="NP_067327.1">
    <property type="nucleotide sequence ID" value="NM_021352.3"/>
</dbReference>
<dbReference type="RefSeq" id="XP_006534825.1">
    <property type="nucleotide sequence ID" value="XM_006534762.2"/>
</dbReference>
<dbReference type="RefSeq" id="XP_030109964.1">
    <property type="nucleotide sequence ID" value="XM_030254104.1"/>
</dbReference>
<dbReference type="SMR" id="Q9JJU9"/>
<dbReference type="BioGRID" id="198915">
    <property type="interactions" value="1"/>
</dbReference>
<dbReference type="FunCoup" id="Q9JJU9">
    <property type="interactions" value="14"/>
</dbReference>
<dbReference type="STRING" id="10090.ENSMUSP00000112618"/>
<dbReference type="iPTMnet" id="Q9JJU9"/>
<dbReference type="PhosphoSitePlus" id="Q9JJU9"/>
<dbReference type="PaxDb" id="10090-ENSMUSP00000113572"/>
<dbReference type="ProteomicsDB" id="284118"/>
<dbReference type="Antibodypedia" id="24112">
    <property type="antibodies" value="121 antibodies from 21 providers"/>
</dbReference>
<dbReference type="DNASU" id="12962"/>
<dbReference type="Ensembl" id="ENSMUST00000076069.13">
    <property type="protein sequence ID" value="ENSMUSP00000075440.7"/>
    <property type="gene ID" value="ENSMUSG00000029352.15"/>
</dbReference>
<dbReference type="Ensembl" id="ENSMUST00000117143.8">
    <property type="protein sequence ID" value="ENSMUSP00000113347.2"/>
    <property type="gene ID" value="ENSMUSG00000029352.15"/>
</dbReference>
<dbReference type="Ensembl" id="ENSMUST00000118226.8">
    <property type="protein sequence ID" value="ENSMUSP00000112618.2"/>
    <property type="gene ID" value="ENSMUSG00000029352.15"/>
</dbReference>
<dbReference type="Ensembl" id="ENSMUST00000119627.8">
    <property type="protein sequence ID" value="ENSMUSP00000113572.2"/>
    <property type="gene ID" value="ENSMUSG00000029352.15"/>
</dbReference>
<dbReference type="Ensembl" id="ENSMUST00000120506.8">
    <property type="protein sequence ID" value="ENSMUSP00000112718.2"/>
    <property type="gene ID" value="ENSMUSG00000029352.15"/>
</dbReference>
<dbReference type="GeneID" id="12962"/>
<dbReference type="KEGG" id="mmu:12962"/>
<dbReference type="UCSC" id="uc012ebl.1">
    <property type="organism name" value="mouse"/>
</dbReference>
<dbReference type="AGR" id="MGI:102717"/>
<dbReference type="CTD" id="1417"/>
<dbReference type="MGI" id="MGI:102717">
    <property type="gene designation" value="Crybb3"/>
</dbReference>
<dbReference type="VEuPathDB" id="HostDB:ENSMUSG00000029352"/>
<dbReference type="eggNOG" id="ENOG502QTNZ">
    <property type="taxonomic scope" value="Eukaryota"/>
</dbReference>
<dbReference type="GeneTree" id="ENSGT00940000158425"/>
<dbReference type="HOGENOM" id="CLU_081883_0_1_1"/>
<dbReference type="InParanoid" id="Q9JJU9"/>
<dbReference type="OMA" id="RIRDRKW"/>
<dbReference type="OrthoDB" id="8701124at2759"/>
<dbReference type="PhylomeDB" id="Q9JJU9"/>
<dbReference type="TreeFam" id="TF331401"/>
<dbReference type="BioGRID-ORCS" id="12962">
    <property type="hits" value="1 hit in 77 CRISPR screens"/>
</dbReference>
<dbReference type="ChiTaRS" id="Crybb3">
    <property type="organism name" value="mouse"/>
</dbReference>
<dbReference type="PRO" id="PR:Q9JJU9"/>
<dbReference type="Proteomes" id="UP000000589">
    <property type="component" value="Chromosome 5"/>
</dbReference>
<dbReference type="RNAct" id="Q9JJU9">
    <property type="molecule type" value="protein"/>
</dbReference>
<dbReference type="Bgee" id="ENSMUSG00000029352">
    <property type="expression patterns" value="Expressed in lens of camera-type eye and 68 other cell types or tissues"/>
</dbReference>
<dbReference type="ExpressionAtlas" id="Q9JJU9">
    <property type="expression patterns" value="baseline and differential"/>
</dbReference>
<dbReference type="GO" id="GO:0005212">
    <property type="term" value="F:structural constituent of eye lens"/>
    <property type="evidence" value="ECO:0007669"/>
    <property type="project" value="UniProtKB-KW"/>
</dbReference>
<dbReference type="GO" id="GO:0001654">
    <property type="term" value="P:eye development"/>
    <property type="evidence" value="ECO:0007669"/>
    <property type="project" value="UniProtKB-ARBA"/>
</dbReference>
<dbReference type="FunFam" id="2.60.20.10:FF:000005">
    <property type="entry name" value="Crystallin, beta B1"/>
    <property type="match status" value="1"/>
</dbReference>
<dbReference type="FunFam" id="2.60.20.10:FF:000002">
    <property type="entry name" value="Crystallin, beta B2"/>
    <property type="match status" value="1"/>
</dbReference>
<dbReference type="Gene3D" id="2.60.20.10">
    <property type="entry name" value="Crystallins"/>
    <property type="match status" value="2"/>
</dbReference>
<dbReference type="InterPro" id="IPR050252">
    <property type="entry name" value="Beta/Gamma-Crystallin"/>
</dbReference>
<dbReference type="InterPro" id="IPR001064">
    <property type="entry name" value="Beta/gamma_crystallin"/>
</dbReference>
<dbReference type="InterPro" id="IPR011024">
    <property type="entry name" value="G_crystallin-like"/>
</dbReference>
<dbReference type="PANTHER" id="PTHR11818:SF13">
    <property type="entry name" value="BETA-CRYSTALLIN B3"/>
    <property type="match status" value="1"/>
</dbReference>
<dbReference type="PANTHER" id="PTHR11818">
    <property type="entry name" value="BETA/GAMMA CRYSTALLIN"/>
    <property type="match status" value="1"/>
</dbReference>
<dbReference type="Pfam" id="PF00030">
    <property type="entry name" value="Crystall"/>
    <property type="match status" value="2"/>
</dbReference>
<dbReference type="PRINTS" id="PR01367">
    <property type="entry name" value="BGCRYSTALLIN"/>
</dbReference>
<dbReference type="SMART" id="SM00247">
    <property type="entry name" value="XTALbg"/>
    <property type="match status" value="2"/>
</dbReference>
<dbReference type="SUPFAM" id="SSF49695">
    <property type="entry name" value="gamma-Crystallin-like"/>
    <property type="match status" value="1"/>
</dbReference>
<dbReference type="PROSITE" id="PS50915">
    <property type="entry name" value="CRYSTALLIN_BETA_GAMMA"/>
    <property type="match status" value="4"/>
</dbReference>
<protein>
    <recommendedName>
        <fullName>Beta-crystallin B3</fullName>
    </recommendedName>
    <alternativeName>
        <fullName>Beta-B3 crystallin</fullName>
    </alternativeName>
    <component>
        <recommendedName>
            <fullName>Beta-crystallin B3, N-terminally processed</fullName>
        </recommendedName>
    </component>
</protein>
<name>CRBB3_MOUSE</name>
<sequence length="211" mass="24291">MAEQHGAPEQAAAGKSHGGLGGSYKVTVYELENFQGKRCELSAECPNLTDSLLEKVGSIQVESGPWLAFERRAFRGEQFVLEKGDYPRWDAWSSSRRSDILLSLRPLHIDGPDHKLHLFENPAFSGRKMEIVDDDVPSLWAHGFQDRVASIRVINGTWVGYEFPGYRGRQYVFERGEFRHWNEWDANQPQLQSVRRIRDQKWHKRGCFLSS</sequence>
<accession>Q9JJU9</accession>
<feature type="chain" id="PRO_0000421775" description="Beta-crystallin B3">
    <location>
        <begin position="1"/>
        <end position="211"/>
    </location>
</feature>
<feature type="initiator methionine" description="Removed; alternate" evidence="2">
    <location>
        <position position="1"/>
    </location>
</feature>
<feature type="chain" id="PRO_0000057561" description="Beta-crystallin B3, N-terminally processed">
    <location>
        <begin position="2"/>
        <end position="211"/>
    </location>
</feature>
<feature type="domain" description="Beta/gamma crystallin 'Greek key' 1" evidence="4">
    <location>
        <begin position="24"/>
        <end position="63"/>
    </location>
</feature>
<feature type="domain" description="Beta/gamma crystallin 'Greek key' 2" evidence="4">
    <location>
        <begin position="64"/>
        <end position="108"/>
    </location>
</feature>
<feature type="domain" description="Beta/gamma crystallin 'Greek key' 3" evidence="4">
    <location>
        <begin position="114"/>
        <end position="155"/>
    </location>
</feature>
<feature type="domain" description="Beta/gamma crystallin 'Greek key' 4" evidence="4">
    <location>
        <begin position="156"/>
        <end position="198"/>
    </location>
</feature>
<feature type="region of interest" description="N-terminal arm">
    <location>
        <begin position="2"/>
        <end position="23"/>
    </location>
</feature>
<feature type="region of interest" description="Connecting peptide">
    <location>
        <begin position="109"/>
        <end position="113"/>
    </location>
</feature>
<feature type="region of interest" description="C-terminal arm">
    <location>
        <begin position="200"/>
        <end position="211"/>
    </location>
</feature>
<feature type="modified residue" description="N-acetylmethionine" evidence="3">
    <location>
        <position position="1"/>
    </location>
</feature>
<feature type="modified residue" description="N-acetylalanine; in Beta-crystallin B3, N-terminally processed" evidence="2">
    <location>
        <position position="2"/>
    </location>
</feature>
<reference key="1">
    <citation type="submission" date="2000-02" db="EMBL/GenBank/DDBJ databases">
        <title>Sequence analysis of beta-A2-, beta-A4- and beta-B3-crystallin cDNA completes the identification of the members of this gene family in the mouse.</title>
        <authorList>
            <person name="Graw J."/>
        </authorList>
    </citation>
    <scope>NUCLEOTIDE SEQUENCE [MRNA]</scope>
</reference>
<reference key="2">
    <citation type="journal article" date="2004" name="Genome Res.">
        <title>The status, quality, and expansion of the NIH full-length cDNA project: the Mammalian Gene Collection (MGC).</title>
        <authorList>
            <consortium name="The MGC Project Team"/>
        </authorList>
    </citation>
    <scope>NUCLEOTIDE SEQUENCE [LARGE SCALE MRNA]</scope>
    <source>
        <strain>C57BL/6J</strain>
        <tissue>Brain</tissue>
        <tissue>Retina</tissue>
    </source>
</reference>
<comment type="function">
    <text>Crystallins are the dominant structural components of the vertebrate eye lens.</text>
</comment>
<comment type="subunit">
    <text evidence="1">Homo/heterodimer, or complexes of higher-order. The structure of beta-crystallin oligomers seems to be stabilized through interactions between the N-terminal arms (By similarity).</text>
</comment>
<comment type="domain">
    <text>Has a two-domain beta-structure, folded into four very similar Greek key motifs.</text>
</comment>
<comment type="similarity">
    <text evidence="5">Belongs to the beta/gamma-crystallin family.</text>
</comment>
<keyword id="KW-0007">Acetylation</keyword>
<keyword id="KW-0273">Eye lens protein</keyword>
<keyword id="KW-1185">Reference proteome</keyword>
<keyword id="KW-0677">Repeat</keyword>
<proteinExistence type="evidence at transcript level"/>
<evidence type="ECO:0000250" key="1"/>
<evidence type="ECO:0000250" key="2">
    <source>
        <dbReference type="UniProtKB" id="P02524"/>
    </source>
</evidence>
<evidence type="ECO:0000250" key="3">
    <source>
        <dbReference type="UniProtKB" id="P26998"/>
    </source>
</evidence>
<evidence type="ECO:0000255" key="4">
    <source>
        <dbReference type="PROSITE-ProRule" id="PRU00028"/>
    </source>
</evidence>
<evidence type="ECO:0000305" key="5"/>
<gene>
    <name type="primary">Crybb3</name>
</gene>
<organism>
    <name type="scientific">Mus musculus</name>
    <name type="common">Mouse</name>
    <dbReference type="NCBI Taxonomy" id="10090"/>
    <lineage>
        <taxon>Eukaryota</taxon>
        <taxon>Metazoa</taxon>
        <taxon>Chordata</taxon>
        <taxon>Craniata</taxon>
        <taxon>Vertebrata</taxon>
        <taxon>Euteleostomi</taxon>
        <taxon>Mammalia</taxon>
        <taxon>Eutheria</taxon>
        <taxon>Euarchontoglires</taxon>
        <taxon>Glires</taxon>
        <taxon>Rodentia</taxon>
        <taxon>Myomorpha</taxon>
        <taxon>Muroidea</taxon>
        <taxon>Muridae</taxon>
        <taxon>Murinae</taxon>
        <taxon>Mus</taxon>
        <taxon>Mus</taxon>
    </lineage>
</organism>